<gene>
    <name evidence="1" type="primary">fosB</name>
    <name type="ordered locus">SaurJH1_2401</name>
</gene>
<organism>
    <name type="scientific">Staphylococcus aureus (strain JH1)</name>
    <dbReference type="NCBI Taxonomy" id="359787"/>
    <lineage>
        <taxon>Bacteria</taxon>
        <taxon>Bacillati</taxon>
        <taxon>Bacillota</taxon>
        <taxon>Bacilli</taxon>
        <taxon>Bacillales</taxon>
        <taxon>Staphylococcaceae</taxon>
        <taxon>Staphylococcus</taxon>
    </lineage>
</organism>
<keyword id="KW-0046">Antibiotic resistance</keyword>
<keyword id="KW-0963">Cytoplasm</keyword>
<keyword id="KW-0460">Magnesium</keyword>
<keyword id="KW-0479">Metal-binding</keyword>
<keyword id="KW-0808">Transferase</keyword>
<feature type="chain" id="PRO_1000087527" description="Metallothiol transferase FosB">
    <location>
        <begin position="1"/>
        <end position="139"/>
    </location>
</feature>
<feature type="domain" description="VOC" evidence="2">
    <location>
        <begin position="4"/>
        <end position="119"/>
    </location>
</feature>
<feature type="active site" description="Proton donor/acceptor" evidence="2">
    <location>
        <position position="115"/>
    </location>
</feature>
<feature type="binding site" evidence="1">
    <location>
        <position position="7"/>
    </location>
    <ligand>
        <name>Mg(2+)</name>
        <dbReference type="ChEBI" id="CHEBI:18420"/>
    </ligand>
</feature>
<feature type="binding site" evidence="1">
    <location>
        <position position="66"/>
    </location>
    <ligand>
        <name>Mg(2+)</name>
        <dbReference type="ChEBI" id="CHEBI:18420"/>
    </ligand>
</feature>
<feature type="binding site" evidence="1">
    <location>
        <position position="115"/>
    </location>
    <ligand>
        <name>Mg(2+)</name>
        <dbReference type="ChEBI" id="CHEBI:18420"/>
    </ligand>
</feature>
<proteinExistence type="inferred from homology"/>
<protein>
    <recommendedName>
        <fullName evidence="1">Metallothiol transferase FosB</fullName>
        <ecNumber evidence="1">2.5.1.-</ecNumber>
    </recommendedName>
    <alternativeName>
        <fullName evidence="1">Fosfomycin resistance protein</fullName>
    </alternativeName>
</protein>
<name>FOSB_STAA2</name>
<reference key="1">
    <citation type="submission" date="2007-06" db="EMBL/GenBank/DDBJ databases">
        <title>Complete sequence of chromosome of Staphylococcus aureus subsp. aureus JH1.</title>
        <authorList>
            <consortium name="US DOE Joint Genome Institute"/>
            <person name="Copeland A."/>
            <person name="Lucas S."/>
            <person name="Lapidus A."/>
            <person name="Barry K."/>
            <person name="Detter J.C."/>
            <person name="Glavina del Rio T."/>
            <person name="Hammon N."/>
            <person name="Israni S."/>
            <person name="Dalin E."/>
            <person name="Tice H."/>
            <person name="Pitluck S."/>
            <person name="Chain P."/>
            <person name="Malfatti S."/>
            <person name="Shin M."/>
            <person name="Vergez L."/>
            <person name="Schmutz J."/>
            <person name="Larimer F."/>
            <person name="Land M."/>
            <person name="Hauser L."/>
            <person name="Kyrpides N."/>
            <person name="Ivanova N."/>
            <person name="Tomasz A."/>
            <person name="Richardson P."/>
        </authorList>
    </citation>
    <scope>NUCLEOTIDE SEQUENCE [LARGE SCALE GENOMIC DNA]</scope>
    <source>
        <strain>JH1</strain>
    </source>
</reference>
<accession>A6U458</accession>
<comment type="function">
    <text evidence="1">Metallothiol transferase which confers resistance to fosfomycin by catalyzing the addition of a thiol cofactor to fosfomycin. L-cysteine is probably the physiological thiol donor.</text>
</comment>
<comment type="cofactor">
    <cofactor evidence="1">
        <name>Mg(2+)</name>
        <dbReference type="ChEBI" id="CHEBI:18420"/>
    </cofactor>
</comment>
<comment type="subunit">
    <text evidence="1">Homodimer.</text>
</comment>
<comment type="subcellular location">
    <subcellularLocation>
        <location evidence="1">Cytoplasm</location>
    </subcellularLocation>
</comment>
<comment type="similarity">
    <text evidence="1">Belongs to the fosfomycin resistance protein family. FosB subfamily.</text>
</comment>
<dbReference type="EC" id="2.5.1.-" evidence="1"/>
<dbReference type="EMBL" id="CP000736">
    <property type="protein sequence ID" value="ABR53226.1"/>
    <property type="molecule type" value="Genomic_DNA"/>
</dbReference>
<dbReference type="SMR" id="A6U458"/>
<dbReference type="KEGG" id="sah:SaurJH1_2401"/>
<dbReference type="HOGENOM" id="CLU_121356_0_0_9"/>
<dbReference type="GO" id="GO:0005737">
    <property type="term" value="C:cytoplasm"/>
    <property type="evidence" value="ECO:0007669"/>
    <property type="project" value="UniProtKB-SubCell"/>
</dbReference>
<dbReference type="GO" id="GO:0000287">
    <property type="term" value="F:magnesium ion binding"/>
    <property type="evidence" value="ECO:0007669"/>
    <property type="project" value="UniProtKB-UniRule"/>
</dbReference>
<dbReference type="GO" id="GO:0016765">
    <property type="term" value="F:transferase activity, transferring alkyl or aryl (other than methyl) groups"/>
    <property type="evidence" value="ECO:0007669"/>
    <property type="project" value="UniProtKB-UniRule"/>
</dbReference>
<dbReference type="GO" id="GO:0046677">
    <property type="term" value="P:response to antibiotic"/>
    <property type="evidence" value="ECO:0007669"/>
    <property type="project" value="UniProtKB-UniRule"/>
</dbReference>
<dbReference type="Gene3D" id="3.10.180.10">
    <property type="entry name" value="2,3-Dihydroxybiphenyl 1,2-Dioxygenase, domain 1"/>
    <property type="match status" value="1"/>
</dbReference>
<dbReference type="HAMAP" id="MF_01512">
    <property type="entry name" value="FosB"/>
    <property type="match status" value="1"/>
</dbReference>
<dbReference type="InterPro" id="IPR051332">
    <property type="entry name" value="Fosfomycin_Res_Enzymes"/>
</dbReference>
<dbReference type="InterPro" id="IPR029068">
    <property type="entry name" value="Glyas_Bleomycin-R_OHBP_Dase"/>
</dbReference>
<dbReference type="InterPro" id="IPR004360">
    <property type="entry name" value="Glyas_Fos-R_dOase_dom"/>
</dbReference>
<dbReference type="InterPro" id="IPR022858">
    <property type="entry name" value="Metallothiol_Trafse_FosB"/>
</dbReference>
<dbReference type="InterPro" id="IPR037523">
    <property type="entry name" value="VOC"/>
</dbReference>
<dbReference type="NCBIfam" id="NF000493">
    <property type="entry name" value="Fos_BSH"/>
    <property type="match status" value="1"/>
</dbReference>
<dbReference type="NCBIfam" id="NF003152">
    <property type="entry name" value="PRK04101.1"/>
    <property type="match status" value="1"/>
</dbReference>
<dbReference type="PANTHER" id="PTHR36113:SF6">
    <property type="entry name" value="FOSFOMYCIN RESISTANCE PROTEIN FOSX"/>
    <property type="match status" value="1"/>
</dbReference>
<dbReference type="PANTHER" id="PTHR36113">
    <property type="entry name" value="LYASE, PUTATIVE-RELATED-RELATED"/>
    <property type="match status" value="1"/>
</dbReference>
<dbReference type="Pfam" id="PF00903">
    <property type="entry name" value="Glyoxalase"/>
    <property type="match status" value="1"/>
</dbReference>
<dbReference type="SUPFAM" id="SSF54593">
    <property type="entry name" value="Glyoxalase/Bleomycin resistance protein/Dihydroxybiphenyl dioxygenase"/>
    <property type="match status" value="1"/>
</dbReference>
<dbReference type="PROSITE" id="PS51819">
    <property type="entry name" value="VOC"/>
    <property type="match status" value="1"/>
</dbReference>
<evidence type="ECO:0000255" key="1">
    <source>
        <dbReference type="HAMAP-Rule" id="MF_01512"/>
    </source>
</evidence>
<evidence type="ECO:0000255" key="2">
    <source>
        <dbReference type="PROSITE-ProRule" id="PRU01163"/>
    </source>
</evidence>
<sequence>MLKSINHICFSVRNLNDSIHFYRDILLGKLLLTGKKTAYFELAGLWIALNEEKDIPRNEIHFSYTHIAFTIDDSEFKYWHQRLKDNNVNILEGRVRDIRDRQSIYFTDPDGHKLELHTGTLENRLNYYKEAKPHMTFYK</sequence>